<protein>
    <recommendedName>
        <fullName>Actin-related protein 8</fullName>
    </recommendedName>
</protein>
<feature type="chain" id="PRO_0000089125" description="Actin-related protein 8">
    <location>
        <begin position="1"/>
        <end position="623"/>
    </location>
</feature>
<feature type="region of interest" description="Disordered" evidence="2">
    <location>
        <begin position="1"/>
        <end position="29"/>
    </location>
</feature>
<feature type="region of interest" description="Disordered" evidence="2">
    <location>
        <begin position="428"/>
        <end position="458"/>
    </location>
</feature>
<feature type="compositionally biased region" description="Basic and acidic residues" evidence="2">
    <location>
        <begin position="1"/>
        <end position="24"/>
    </location>
</feature>
<feature type="compositionally biased region" description="Low complexity" evidence="2">
    <location>
        <begin position="428"/>
        <end position="438"/>
    </location>
</feature>
<feature type="binding site" evidence="1">
    <location>
        <begin position="283"/>
        <end position="286"/>
    </location>
    <ligand>
        <name>ATP</name>
        <dbReference type="ChEBI" id="CHEBI:30616"/>
    </ligand>
</feature>
<accession>P59679</accession>
<name>ARP8_DANRE</name>
<keyword id="KW-0067">ATP-binding</keyword>
<keyword id="KW-0131">Cell cycle</keyword>
<keyword id="KW-0132">Cell division</keyword>
<keyword id="KW-0158">Chromosome</keyword>
<keyword id="KW-0227">DNA damage</keyword>
<keyword id="KW-0233">DNA recombination</keyword>
<keyword id="KW-0234">DNA repair</keyword>
<keyword id="KW-0498">Mitosis</keyword>
<keyword id="KW-0547">Nucleotide-binding</keyword>
<keyword id="KW-0539">Nucleus</keyword>
<keyword id="KW-1185">Reference proteome</keyword>
<keyword id="KW-0804">Transcription</keyword>
<keyword id="KW-0805">Transcription regulation</keyword>
<reference key="1">
    <citation type="submission" date="2003-01" db="EMBL/GenBank/DDBJ databases">
        <authorList>
            <consortium name="NIH - Zebrafish Gene Collection (ZGC) project"/>
        </authorList>
    </citation>
    <scope>NUCLEOTIDE SEQUENCE [LARGE SCALE MRNA]</scope>
    <source>
        <strain>AB</strain>
    </source>
</reference>
<evidence type="ECO:0000250" key="1"/>
<evidence type="ECO:0000256" key="2">
    <source>
        <dbReference type="SAM" id="MobiDB-lite"/>
    </source>
</evidence>
<evidence type="ECO:0000305" key="3"/>
<organism>
    <name type="scientific">Danio rerio</name>
    <name type="common">Zebrafish</name>
    <name type="synonym">Brachydanio rerio</name>
    <dbReference type="NCBI Taxonomy" id="7955"/>
    <lineage>
        <taxon>Eukaryota</taxon>
        <taxon>Metazoa</taxon>
        <taxon>Chordata</taxon>
        <taxon>Craniata</taxon>
        <taxon>Vertebrata</taxon>
        <taxon>Euteleostomi</taxon>
        <taxon>Actinopterygii</taxon>
        <taxon>Neopterygii</taxon>
        <taxon>Teleostei</taxon>
        <taxon>Ostariophysi</taxon>
        <taxon>Cypriniformes</taxon>
        <taxon>Danionidae</taxon>
        <taxon>Danioninae</taxon>
        <taxon>Danio</taxon>
    </lineage>
</organism>
<proteinExistence type="evidence at transcript level"/>
<comment type="function">
    <text evidence="1">Plays an important role in the functional organization of mitotic chromosomes. Exhibits low basal ATPase activity, and unable to polymerize (By similarity).</text>
</comment>
<comment type="function">
    <text evidence="1">Proposed core component of the chromatin remodeling INO80 complex which is involved in transcriptional regulation, DNA replication and probably DNA repair. Required for the recruitment of INO80 (and probably the INO80 complex) to sites of DNA damage Strongly prefer nucleosomes and H3-H4 tetramers over H2A-H2B dimers, suggesting it may act as a nucleosome recognition module within the complex (By similarity).</text>
</comment>
<comment type="subunit">
    <text evidence="1">Component of the chromatin remodeling INO80 complex; specifically part of a complex module associated with the DBINO domain of INO80. Exists as monomers and dimers, but the dimer is most probably the biologically relevant form required for stable interactions with histones that exploits the twofold symmetry of the nucleosome core (By similarity).</text>
</comment>
<comment type="subcellular location">
    <subcellularLocation>
        <location evidence="1">Nucleus</location>
    </subcellularLocation>
    <subcellularLocation>
        <location evidence="1">Chromosome</location>
    </subcellularLocation>
    <text evidence="1">Specifically localizes to mitotic chromosomes.</text>
</comment>
<comment type="similarity">
    <text evidence="3">Belongs to the actin family. ARP8 subfamily.</text>
</comment>
<dbReference type="EMBL" id="BC044364">
    <property type="protein sequence ID" value="AAH44364.1"/>
    <property type="molecule type" value="mRNA"/>
</dbReference>
<dbReference type="RefSeq" id="NP_001001400.1">
    <property type="nucleotide sequence ID" value="NM_001001400.1"/>
</dbReference>
<dbReference type="SMR" id="P59679"/>
<dbReference type="FunCoup" id="P59679">
    <property type="interactions" value="2185"/>
</dbReference>
<dbReference type="STRING" id="7955.ENSDARP00000137856"/>
<dbReference type="PaxDb" id="7955-ENSDARP00000088695"/>
<dbReference type="GeneID" id="326866"/>
<dbReference type="KEGG" id="dre:326866"/>
<dbReference type="AGR" id="ZFIN:ZDB-GENE-030131-5065"/>
<dbReference type="CTD" id="93973"/>
<dbReference type="ZFIN" id="ZDB-GENE-030131-5065">
    <property type="gene designation" value="actr8"/>
</dbReference>
<dbReference type="eggNOG" id="KOG0797">
    <property type="taxonomic scope" value="Eukaryota"/>
</dbReference>
<dbReference type="InParanoid" id="P59679"/>
<dbReference type="OrthoDB" id="5572108at2759"/>
<dbReference type="PhylomeDB" id="P59679"/>
<dbReference type="PRO" id="PR:P59679"/>
<dbReference type="Proteomes" id="UP000000437">
    <property type="component" value="Chromosome 8"/>
</dbReference>
<dbReference type="GO" id="GO:0031011">
    <property type="term" value="C:Ino80 complex"/>
    <property type="evidence" value="ECO:0000318"/>
    <property type="project" value="GO_Central"/>
</dbReference>
<dbReference type="GO" id="GO:0005524">
    <property type="term" value="F:ATP binding"/>
    <property type="evidence" value="ECO:0007669"/>
    <property type="project" value="UniProtKB-KW"/>
</dbReference>
<dbReference type="GO" id="GO:0051301">
    <property type="term" value="P:cell division"/>
    <property type="evidence" value="ECO:0007669"/>
    <property type="project" value="UniProtKB-KW"/>
</dbReference>
<dbReference type="GO" id="GO:0006310">
    <property type="term" value="P:DNA recombination"/>
    <property type="evidence" value="ECO:0007669"/>
    <property type="project" value="UniProtKB-KW"/>
</dbReference>
<dbReference type="GO" id="GO:0006302">
    <property type="term" value="P:double-strand break repair"/>
    <property type="evidence" value="ECO:0000318"/>
    <property type="project" value="GO_Central"/>
</dbReference>
<dbReference type="GO" id="GO:0006355">
    <property type="term" value="P:regulation of DNA-templated transcription"/>
    <property type="evidence" value="ECO:0000318"/>
    <property type="project" value="GO_Central"/>
</dbReference>
<dbReference type="CDD" id="cd10206">
    <property type="entry name" value="ASKHA_NBD_Arp8-like"/>
    <property type="match status" value="1"/>
</dbReference>
<dbReference type="FunFam" id="3.30.420.40:FF:000100">
    <property type="entry name" value="Actin-related protein 8"/>
    <property type="match status" value="1"/>
</dbReference>
<dbReference type="FunFam" id="3.30.420.40:FF:000121">
    <property type="entry name" value="Actin-related protein 8"/>
    <property type="match status" value="1"/>
</dbReference>
<dbReference type="FunFam" id="3.90.640.10:FF:000020">
    <property type="entry name" value="Actin-related protein 8"/>
    <property type="match status" value="1"/>
</dbReference>
<dbReference type="Gene3D" id="3.30.420.40">
    <property type="match status" value="3"/>
</dbReference>
<dbReference type="Gene3D" id="3.90.640.10">
    <property type="entry name" value="Actin, Chain A, domain 4"/>
    <property type="match status" value="1"/>
</dbReference>
<dbReference type="InterPro" id="IPR004000">
    <property type="entry name" value="Actin"/>
</dbReference>
<dbReference type="InterPro" id="IPR043129">
    <property type="entry name" value="ATPase_NBD"/>
</dbReference>
<dbReference type="PANTHER" id="PTHR11937">
    <property type="entry name" value="ACTIN"/>
    <property type="match status" value="1"/>
</dbReference>
<dbReference type="Pfam" id="PF00022">
    <property type="entry name" value="Actin"/>
    <property type="match status" value="1"/>
</dbReference>
<dbReference type="SMART" id="SM00268">
    <property type="entry name" value="ACTIN"/>
    <property type="match status" value="1"/>
</dbReference>
<dbReference type="SUPFAM" id="SSF53067">
    <property type="entry name" value="Actin-like ATPase domain"/>
    <property type="match status" value="2"/>
</dbReference>
<sequence length="623" mass="70133">MTQTDRDAENGRDREKDREKEQQRGVKRPIMPAAVPEPVQEQIQANFIVVIHPGSRTLRLGRATDTLPISVPHVIARRHKHPGQSRYEDKCLLREGLNSADSNEQRQNGLKMVDQVIWSKKMSNGVRRTPVSAEQARLYNRQIRPAVLDPNSKVSWTNTSHHPEYVVGEEALYVNPTDCYSVHWPVCRGRLNLHSGSGGSLSAVMMDLEHIWTHALQKLLQIPLKDLKYYRCILLIPDIYNRQHVKEIVNMLLVKMGFSAVVVHQESVCATFGSGLSSACVVDVGDQKTSVCCVEDGVSHRSSRLCLAYGGSDVTRCFFWLMQRAGFPYRDCQLGNKLDCVLLQQLKESFCHLDQDISGLQDHEFRTRFPDSPVLLYQLRLGDEKLQAPMTLFYPAAFGIVGQRMTSLLHRSQGDAEDPHDEHFLLTTQSKQDQSSKASADRKSFPKPSSFEGESSVCEVSDRSSLGQDLDLGHSQAECLVGGAETEETPSALLSRKTAMSQFEGKALGIDKAILHSIDSCASDETKRKMYSCILVVGGGLLFHGAQEFLQHRILNKMPPSFRCMVESVDVITRPKDTDARVCVWKGGSVLACLDTTQELWIHQREWQRFGVRMLRERAAFVW</sequence>
<gene>
    <name type="primary">actr8</name>
    <name type="ORF">zgc:55313</name>
</gene>